<reference key="1">
    <citation type="journal article" date="2008" name="J. Bacteriol.">
        <title>Insights into the environmental resistance gene pool from the genome sequence of the multidrug-resistant environmental isolate Escherichia coli SMS-3-5.</title>
        <authorList>
            <person name="Fricke W.F."/>
            <person name="Wright M.S."/>
            <person name="Lindell A.H."/>
            <person name="Harkins D.M."/>
            <person name="Baker-Austin C."/>
            <person name="Ravel J."/>
            <person name="Stepanauskas R."/>
        </authorList>
    </citation>
    <scope>NUCLEOTIDE SEQUENCE [LARGE SCALE GENOMIC DNA]</scope>
    <source>
        <strain>SMS-3-5 / SECEC</strain>
    </source>
</reference>
<sequence length="353" mass="39348">MTEPLKPRIDFDGPLDVDQNPEFRAQQTFDENQAQNFAPATLDEAPEEEGQVEAVMDAALRPKRSLWRKMVMGGLALFGASVVGQGVQWTMNAWQTQDWVALGGCAAGALIIGAGVGSVVTEWRRLWRLRQRAHERDEARDLLHSHGTGKGRAFCEKLAQQAGIDQSHPALQRWYASIHETQNDREVVSLYAHLVQPVLDAQARREISRSAAESTLMIAVSPLALVDMAFIAWRNLRLINRIATLYGIELGYYSRLRLFKLVLLNIAFAGASELVREVGMDWMSQDLAARLSTRAAQGIGAGLLTARLGIKAMELCRPLPWLDDDKPRLGDFRRQLIGQVKETLQKGKTPSEK</sequence>
<accession>B1LGA6</accession>
<evidence type="ECO:0000255" key="1">
    <source>
        <dbReference type="HAMAP-Rule" id="MF_01085"/>
    </source>
</evidence>
<gene>
    <name evidence="1" type="primary">ycjF</name>
    <name type="ordered locus">EcSMS35_1800</name>
</gene>
<feature type="chain" id="PRO_1000136887" description="UPF0283 membrane protein YcjF">
    <location>
        <begin position="1"/>
        <end position="353"/>
    </location>
</feature>
<feature type="transmembrane region" description="Helical" evidence="1">
    <location>
        <begin position="70"/>
        <end position="90"/>
    </location>
</feature>
<feature type="transmembrane region" description="Helical" evidence="1">
    <location>
        <begin position="100"/>
        <end position="120"/>
    </location>
</feature>
<feature type="transmembrane region" description="Helical" evidence="1">
    <location>
        <begin position="213"/>
        <end position="233"/>
    </location>
</feature>
<dbReference type="EMBL" id="CP000970">
    <property type="protein sequence ID" value="ACB17155.1"/>
    <property type="molecule type" value="Genomic_DNA"/>
</dbReference>
<dbReference type="RefSeq" id="WP_000138696.1">
    <property type="nucleotide sequence ID" value="NC_010498.1"/>
</dbReference>
<dbReference type="KEGG" id="ecm:EcSMS35_1800"/>
<dbReference type="HOGENOM" id="CLU_057693_2_0_6"/>
<dbReference type="Proteomes" id="UP000007011">
    <property type="component" value="Chromosome"/>
</dbReference>
<dbReference type="GO" id="GO:0005886">
    <property type="term" value="C:plasma membrane"/>
    <property type="evidence" value="ECO:0007669"/>
    <property type="project" value="UniProtKB-SubCell"/>
</dbReference>
<dbReference type="HAMAP" id="MF_01085">
    <property type="entry name" value="UPF0283"/>
    <property type="match status" value="1"/>
</dbReference>
<dbReference type="InterPro" id="IPR021147">
    <property type="entry name" value="DUF697"/>
</dbReference>
<dbReference type="InterPro" id="IPR006507">
    <property type="entry name" value="UPF0283"/>
</dbReference>
<dbReference type="NCBIfam" id="TIGR01620">
    <property type="entry name" value="hyp_HI0043"/>
    <property type="match status" value="1"/>
</dbReference>
<dbReference type="PANTHER" id="PTHR39342">
    <property type="entry name" value="UPF0283 MEMBRANE PROTEIN YCJF"/>
    <property type="match status" value="1"/>
</dbReference>
<dbReference type="PANTHER" id="PTHR39342:SF1">
    <property type="entry name" value="UPF0283 MEMBRANE PROTEIN YCJF"/>
    <property type="match status" value="1"/>
</dbReference>
<dbReference type="Pfam" id="PF05128">
    <property type="entry name" value="DUF697"/>
    <property type="match status" value="1"/>
</dbReference>
<comment type="subcellular location">
    <subcellularLocation>
        <location evidence="1">Cell inner membrane</location>
        <topology evidence="1">Multi-pass membrane protein</topology>
    </subcellularLocation>
</comment>
<comment type="similarity">
    <text evidence="1">Belongs to the UPF0283 family.</text>
</comment>
<organism>
    <name type="scientific">Escherichia coli (strain SMS-3-5 / SECEC)</name>
    <dbReference type="NCBI Taxonomy" id="439855"/>
    <lineage>
        <taxon>Bacteria</taxon>
        <taxon>Pseudomonadati</taxon>
        <taxon>Pseudomonadota</taxon>
        <taxon>Gammaproteobacteria</taxon>
        <taxon>Enterobacterales</taxon>
        <taxon>Enterobacteriaceae</taxon>
        <taxon>Escherichia</taxon>
    </lineage>
</organism>
<protein>
    <recommendedName>
        <fullName evidence="1">UPF0283 membrane protein YcjF</fullName>
    </recommendedName>
</protein>
<keyword id="KW-0997">Cell inner membrane</keyword>
<keyword id="KW-1003">Cell membrane</keyword>
<keyword id="KW-0472">Membrane</keyword>
<keyword id="KW-0812">Transmembrane</keyword>
<keyword id="KW-1133">Transmembrane helix</keyword>
<proteinExistence type="inferred from homology"/>
<name>YCJF_ECOSM</name>